<protein>
    <recommendedName>
        <fullName evidence="1">Glycine cleavage system H protein</fullName>
    </recommendedName>
</protein>
<organism>
    <name type="scientific">Burkholderia ambifaria (strain MC40-6)</name>
    <dbReference type="NCBI Taxonomy" id="398577"/>
    <lineage>
        <taxon>Bacteria</taxon>
        <taxon>Pseudomonadati</taxon>
        <taxon>Pseudomonadota</taxon>
        <taxon>Betaproteobacteria</taxon>
        <taxon>Burkholderiales</taxon>
        <taxon>Burkholderiaceae</taxon>
        <taxon>Burkholderia</taxon>
        <taxon>Burkholderia cepacia complex</taxon>
    </lineage>
</organism>
<gene>
    <name evidence="1" type="primary">gcvH</name>
    <name type="ordered locus">BamMC406_0144</name>
</gene>
<sequence>MSNVPADLKYTDEHEWIRTEADGTLTVGITDHAQSTLGDIVFLELPAVGKSVSAGDAVGVVESVKAASDIYSPVSGEIIAINEEAADSPEEVNSDAYGVWLFKIKLADGASTDKLIDADAYGKLID</sequence>
<comment type="function">
    <text evidence="1">The glycine cleavage system catalyzes the degradation of glycine. The H protein shuttles the methylamine group of glycine from the P protein to the T protein.</text>
</comment>
<comment type="cofactor">
    <cofactor evidence="1">
        <name>(R)-lipoate</name>
        <dbReference type="ChEBI" id="CHEBI:83088"/>
    </cofactor>
    <text evidence="1">Binds 1 lipoyl cofactor covalently.</text>
</comment>
<comment type="subunit">
    <text evidence="1">The glycine cleavage system is composed of four proteins: P, T, L and H.</text>
</comment>
<comment type="similarity">
    <text evidence="1">Belongs to the GcvH family.</text>
</comment>
<accession>B1YQQ2</accession>
<name>GCSH_BURA4</name>
<keyword id="KW-0450">Lipoyl</keyword>
<dbReference type="EMBL" id="CP001025">
    <property type="protein sequence ID" value="ACB62646.1"/>
    <property type="molecule type" value="Genomic_DNA"/>
</dbReference>
<dbReference type="RefSeq" id="WP_006754103.1">
    <property type="nucleotide sequence ID" value="NC_010551.1"/>
</dbReference>
<dbReference type="SMR" id="B1YQQ2"/>
<dbReference type="KEGG" id="bac:BamMC406_0144"/>
<dbReference type="HOGENOM" id="CLU_097408_2_1_4"/>
<dbReference type="OrthoDB" id="9796712at2"/>
<dbReference type="Proteomes" id="UP000001680">
    <property type="component" value="Chromosome 1"/>
</dbReference>
<dbReference type="GO" id="GO:0005829">
    <property type="term" value="C:cytosol"/>
    <property type="evidence" value="ECO:0007669"/>
    <property type="project" value="TreeGrafter"/>
</dbReference>
<dbReference type="GO" id="GO:0005960">
    <property type="term" value="C:glycine cleavage complex"/>
    <property type="evidence" value="ECO:0007669"/>
    <property type="project" value="InterPro"/>
</dbReference>
<dbReference type="GO" id="GO:0019464">
    <property type="term" value="P:glycine decarboxylation via glycine cleavage system"/>
    <property type="evidence" value="ECO:0007669"/>
    <property type="project" value="UniProtKB-UniRule"/>
</dbReference>
<dbReference type="CDD" id="cd06848">
    <property type="entry name" value="GCS_H"/>
    <property type="match status" value="1"/>
</dbReference>
<dbReference type="Gene3D" id="2.40.50.100">
    <property type="match status" value="1"/>
</dbReference>
<dbReference type="HAMAP" id="MF_00272">
    <property type="entry name" value="GcvH"/>
    <property type="match status" value="1"/>
</dbReference>
<dbReference type="InterPro" id="IPR003016">
    <property type="entry name" value="2-oxoA_DH_lipoyl-BS"/>
</dbReference>
<dbReference type="InterPro" id="IPR000089">
    <property type="entry name" value="Biotin_lipoyl"/>
</dbReference>
<dbReference type="InterPro" id="IPR002930">
    <property type="entry name" value="GCV_H"/>
</dbReference>
<dbReference type="InterPro" id="IPR033753">
    <property type="entry name" value="GCV_H/Fam206"/>
</dbReference>
<dbReference type="InterPro" id="IPR017453">
    <property type="entry name" value="GCV_H_sub"/>
</dbReference>
<dbReference type="InterPro" id="IPR011053">
    <property type="entry name" value="Single_hybrid_motif"/>
</dbReference>
<dbReference type="NCBIfam" id="TIGR00527">
    <property type="entry name" value="gcvH"/>
    <property type="match status" value="1"/>
</dbReference>
<dbReference type="NCBIfam" id="NF002270">
    <property type="entry name" value="PRK01202.1"/>
    <property type="match status" value="1"/>
</dbReference>
<dbReference type="PANTHER" id="PTHR11715">
    <property type="entry name" value="GLYCINE CLEAVAGE SYSTEM H PROTEIN"/>
    <property type="match status" value="1"/>
</dbReference>
<dbReference type="PANTHER" id="PTHR11715:SF3">
    <property type="entry name" value="GLYCINE CLEAVAGE SYSTEM H PROTEIN-RELATED"/>
    <property type="match status" value="1"/>
</dbReference>
<dbReference type="Pfam" id="PF01597">
    <property type="entry name" value="GCV_H"/>
    <property type="match status" value="1"/>
</dbReference>
<dbReference type="SUPFAM" id="SSF51230">
    <property type="entry name" value="Single hybrid motif"/>
    <property type="match status" value="1"/>
</dbReference>
<dbReference type="PROSITE" id="PS50968">
    <property type="entry name" value="BIOTINYL_LIPOYL"/>
    <property type="match status" value="1"/>
</dbReference>
<dbReference type="PROSITE" id="PS00189">
    <property type="entry name" value="LIPOYL"/>
    <property type="match status" value="1"/>
</dbReference>
<feature type="chain" id="PRO_1000114499" description="Glycine cleavage system H protein">
    <location>
        <begin position="1"/>
        <end position="126"/>
    </location>
</feature>
<feature type="domain" description="Lipoyl-binding" evidence="2">
    <location>
        <begin position="24"/>
        <end position="105"/>
    </location>
</feature>
<feature type="modified residue" description="N6-lipoyllysine" evidence="1">
    <location>
        <position position="65"/>
    </location>
</feature>
<evidence type="ECO:0000255" key="1">
    <source>
        <dbReference type="HAMAP-Rule" id="MF_00272"/>
    </source>
</evidence>
<evidence type="ECO:0000255" key="2">
    <source>
        <dbReference type="PROSITE-ProRule" id="PRU01066"/>
    </source>
</evidence>
<proteinExistence type="inferred from homology"/>
<reference key="1">
    <citation type="submission" date="2008-04" db="EMBL/GenBank/DDBJ databases">
        <title>Complete sequence of chromosome 1 of Burkholderia ambifaria MC40-6.</title>
        <authorList>
            <person name="Copeland A."/>
            <person name="Lucas S."/>
            <person name="Lapidus A."/>
            <person name="Glavina del Rio T."/>
            <person name="Dalin E."/>
            <person name="Tice H."/>
            <person name="Pitluck S."/>
            <person name="Chain P."/>
            <person name="Malfatti S."/>
            <person name="Shin M."/>
            <person name="Vergez L."/>
            <person name="Lang D."/>
            <person name="Schmutz J."/>
            <person name="Larimer F."/>
            <person name="Land M."/>
            <person name="Hauser L."/>
            <person name="Kyrpides N."/>
            <person name="Lykidis A."/>
            <person name="Ramette A."/>
            <person name="Konstantinidis K."/>
            <person name="Tiedje J."/>
            <person name="Richardson P."/>
        </authorList>
    </citation>
    <scope>NUCLEOTIDE SEQUENCE [LARGE SCALE GENOMIC DNA]</scope>
    <source>
        <strain>MC40-6</strain>
    </source>
</reference>